<feature type="chain" id="PRO_0000430279" description="Sister chromatid cohesion 1 protein 4">
    <location>
        <begin position="1"/>
        <end position="1031"/>
    </location>
</feature>
<feature type="region of interest" description="Disordered" evidence="2">
    <location>
        <begin position="461"/>
        <end position="481"/>
    </location>
</feature>
<feature type="region of interest" description="Disordered" evidence="2">
    <location>
        <begin position="661"/>
        <end position="703"/>
    </location>
</feature>
<feature type="region of interest" description="Disordered" evidence="2">
    <location>
        <begin position="742"/>
        <end position="772"/>
    </location>
</feature>
<feature type="region of interest" description="Disordered" evidence="2">
    <location>
        <begin position="803"/>
        <end position="835"/>
    </location>
</feature>
<feature type="short sequence motif" description="Nuclear localization signal" evidence="1">
    <location>
        <begin position="545"/>
        <end position="552"/>
    </location>
</feature>
<feature type="compositionally biased region" description="Basic and acidic residues" evidence="2">
    <location>
        <begin position="742"/>
        <end position="762"/>
    </location>
</feature>
<feature type="compositionally biased region" description="Basic and acidic residues" evidence="2">
    <location>
        <begin position="803"/>
        <end position="825"/>
    </location>
</feature>
<feature type="sequence conflict" description="In Ref. 4; AAK96855/AAL66884." evidence="5" ref="4">
    <original>I</original>
    <variation>V</variation>
    <location>
        <position position="1030"/>
    </location>
</feature>
<evidence type="ECO:0000250" key="1"/>
<evidence type="ECO:0000256" key="2">
    <source>
        <dbReference type="SAM" id="MobiDB-lite"/>
    </source>
</evidence>
<evidence type="ECO:0000269" key="3">
    <source>
    </source>
</evidence>
<evidence type="ECO:0000269" key="4">
    <source>
    </source>
</evidence>
<evidence type="ECO:0000305" key="5"/>
<protein>
    <recommendedName>
        <fullName>Sister chromatid cohesion 1 protein 4</fullName>
        <shortName>AtRAD21-3</shortName>
        <shortName>AtRAD21.3</shortName>
    </recommendedName>
</protein>
<accession>Q8W1Y0</accession>
<accession>Q940G1</accession>
<accession>Q9LF01</accession>
<keyword id="KW-0131">Cell cycle</keyword>
<keyword id="KW-0132">Cell division</keyword>
<keyword id="KW-0137">Centromere</keyword>
<keyword id="KW-0158">Chromosome</keyword>
<keyword id="KW-0159">Chromosome partition</keyword>
<keyword id="KW-0498">Mitosis</keyword>
<keyword id="KW-0539">Nucleus</keyword>
<keyword id="KW-1185">Reference proteome</keyword>
<sequence length="1031" mass="114059">MFYSQFILAKKGPLGTIWIAAHLERKLRKNQVADTDIGVSVDSILFPEAPIALRLSSHLLLGVVRIYSRKVNYLFDDCSEALLKVKQAFRSAAVDLPPEESTAPYHSITLPETFDLDDFELPDNEIFQGNYVDHHVSTKEQITLQDTMDGVVYSTSQFGLDERFGDGDTSQAALDLDEAVFQDKDVIGSDDEGVPGIDHNAYLDAAAPGIKDSMEGVSEAMPMDFNEEQVEDLAMNNEFIEDAQAPQTPGLVEVPNSSSVREQMACDDHMDVEDLNAEEGIKSSGELNANEMPKRGEDLSSEYNAPESAVTPVEVDKSQIDENVNTQNEPEEERAEHVHVTSPCCSHITTEMEDPGQVMNEAGANVVPDKPDAVPPLETPGEENRDHFAIATEVNQETDSSLQGDEQAYSRPDGQLNNAHETDEQLGNLTGFTDSDFPPPEKVLAVPNRQGDGNDFMVESTPDKEDPGTCNDDAGNNNITGKKRTFTESTLTAESLNSVESVGLIQSKRTADSVPDDDDLLSSILVGKSSFLKMRPTPVLEPATTKRLRSAPRSTATKRKVLMDDPMVLHGDIIRQQLTNTEDIRRVRKKAPCTVPEIVMLQRQALEDGLFKEPIFTGMSVELVSLHTEPYDLRGIMIIENDDRHASVGAVEDNECSVTAVEENKTEESSDPQAHPNDCEEQPGTAHTHPQEEQTINQQEELKDDNELAEKSDLEVLKEGNGAADEVNLVVIDDVSQIPSEEKLDRVEDLQVEESHENHDGEGGQDVCADPNEKSCTDVIEIAEGDTDINPIFNEMDLKVEDELPHEDEKTDASAEVSELGRDDQTPCDNTVGSTETGCLEAGDLSNMALENCNEPLVEANSDGLNPETESYNKYEPHNEMSNEEASMQNALDGEHTSRDGLMGDNDEMDTMENAHDTGFLNVDDDEVDEDHEEDDIQYDDETRLLENSGWSSRTRAVAKYLQTLFDKETENGKNVLVADKLLAGKTRKEASRMFFETLVLKTRDYIQVEQGKPYESIIIKPRPKLTKSIF</sequence>
<organism>
    <name type="scientific">Arabidopsis thaliana</name>
    <name type="common">Mouse-ear cress</name>
    <dbReference type="NCBI Taxonomy" id="3702"/>
    <lineage>
        <taxon>Eukaryota</taxon>
        <taxon>Viridiplantae</taxon>
        <taxon>Streptophyta</taxon>
        <taxon>Embryophyta</taxon>
        <taxon>Tracheophyta</taxon>
        <taxon>Spermatophyta</taxon>
        <taxon>Magnoliopsida</taxon>
        <taxon>eudicotyledons</taxon>
        <taxon>Gunneridae</taxon>
        <taxon>Pentapetalae</taxon>
        <taxon>rosids</taxon>
        <taxon>malvids</taxon>
        <taxon>Brassicales</taxon>
        <taxon>Brassicaceae</taxon>
        <taxon>Camelineae</taxon>
        <taxon>Arabidopsis</taxon>
    </lineage>
</organism>
<dbReference type="EMBL" id="AF400129">
    <property type="protein sequence ID" value="AAL62060.1"/>
    <property type="molecule type" value="mRNA"/>
</dbReference>
<dbReference type="EMBL" id="AL391148">
    <property type="protein sequence ID" value="CAC01868.1"/>
    <property type="status" value="ALT_SEQ"/>
    <property type="molecule type" value="Genomic_DNA"/>
</dbReference>
<dbReference type="EMBL" id="CP002688">
    <property type="protein sequence ID" value="AED92267.1"/>
    <property type="molecule type" value="Genomic_DNA"/>
</dbReference>
<dbReference type="EMBL" id="AY054664">
    <property type="protein sequence ID" value="AAK96855.1"/>
    <property type="status" value="ALT_INIT"/>
    <property type="molecule type" value="mRNA"/>
</dbReference>
<dbReference type="EMBL" id="AY072469">
    <property type="protein sequence ID" value="AAL66884.1"/>
    <property type="molecule type" value="mRNA"/>
</dbReference>
<dbReference type="PIR" id="T51497">
    <property type="entry name" value="T51497"/>
</dbReference>
<dbReference type="RefSeq" id="NP_197131.2">
    <property type="nucleotide sequence ID" value="NM_121632.4"/>
</dbReference>
<dbReference type="SMR" id="Q8W1Y0"/>
<dbReference type="BioGRID" id="16763">
    <property type="interactions" value="9"/>
</dbReference>
<dbReference type="FunCoup" id="Q8W1Y0">
    <property type="interactions" value="1844"/>
</dbReference>
<dbReference type="STRING" id="3702.Q8W1Y0"/>
<dbReference type="iPTMnet" id="Q8W1Y0"/>
<dbReference type="PaxDb" id="3702-AT5G16270.1"/>
<dbReference type="ProteomicsDB" id="234101"/>
<dbReference type="EnsemblPlants" id="AT5G16270.1">
    <property type="protein sequence ID" value="AT5G16270.1"/>
    <property type="gene ID" value="AT5G16270"/>
</dbReference>
<dbReference type="GeneID" id="831487"/>
<dbReference type="Gramene" id="AT5G16270.1">
    <property type="protein sequence ID" value="AT5G16270.1"/>
    <property type="gene ID" value="AT5G16270"/>
</dbReference>
<dbReference type="KEGG" id="ath:AT5G16270"/>
<dbReference type="Araport" id="AT5G16270"/>
<dbReference type="TAIR" id="AT5G16270">
    <property type="gene designation" value="SYN4"/>
</dbReference>
<dbReference type="eggNOG" id="KOG1213">
    <property type="taxonomic scope" value="Eukaryota"/>
</dbReference>
<dbReference type="HOGENOM" id="CLU_007674_0_0_1"/>
<dbReference type="InParanoid" id="Q8W1Y0"/>
<dbReference type="OMA" id="HNEPMAV"/>
<dbReference type="OrthoDB" id="6511759at2759"/>
<dbReference type="PhylomeDB" id="Q8W1Y0"/>
<dbReference type="CD-CODE" id="4299E36E">
    <property type="entry name" value="Nucleolus"/>
</dbReference>
<dbReference type="PRO" id="PR:Q8W1Y0"/>
<dbReference type="Proteomes" id="UP000006548">
    <property type="component" value="Chromosome 5"/>
</dbReference>
<dbReference type="ExpressionAtlas" id="Q8W1Y0">
    <property type="expression patterns" value="baseline and differential"/>
</dbReference>
<dbReference type="GO" id="GO:0000775">
    <property type="term" value="C:chromosome, centromeric region"/>
    <property type="evidence" value="ECO:0007669"/>
    <property type="project" value="UniProtKB-SubCell"/>
</dbReference>
<dbReference type="GO" id="GO:0008278">
    <property type="term" value="C:cohesin complex"/>
    <property type="evidence" value="ECO:0007669"/>
    <property type="project" value="InterPro"/>
</dbReference>
<dbReference type="GO" id="GO:0005634">
    <property type="term" value="C:nucleus"/>
    <property type="evidence" value="ECO:0007669"/>
    <property type="project" value="UniProtKB-SubCell"/>
</dbReference>
<dbReference type="GO" id="GO:0051301">
    <property type="term" value="P:cell division"/>
    <property type="evidence" value="ECO:0007669"/>
    <property type="project" value="UniProtKB-KW"/>
</dbReference>
<dbReference type="GO" id="GO:0070601">
    <property type="term" value="P:centromeric sister chromatid cohesion"/>
    <property type="evidence" value="ECO:0000315"/>
    <property type="project" value="UniProtKB"/>
</dbReference>
<dbReference type="GO" id="GO:0007059">
    <property type="term" value="P:chromosome segregation"/>
    <property type="evidence" value="ECO:0007669"/>
    <property type="project" value="UniProtKB-KW"/>
</dbReference>
<dbReference type="GO" id="GO:0006302">
    <property type="term" value="P:double-strand break repair"/>
    <property type="evidence" value="ECO:0000315"/>
    <property type="project" value="TAIR"/>
</dbReference>
<dbReference type="GO" id="GO:0007062">
    <property type="term" value="P:sister chromatid cohesion"/>
    <property type="evidence" value="ECO:0000315"/>
    <property type="project" value="TAIR"/>
</dbReference>
<dbReference type="CDD" id="cd21793">
    <property type="entry name" value="Rad21_Rec8_M_AtSYN1-like"/>
    <property type="match status" value="1"/>
</dbReference>
<dbReference type="FunFam" id="1.10.10.580:FF:000002">
    <property type="entry name" value="Sister chromatid cohesion 1 protein 4"/>
    <property type="match status" value="1"/>
</dbReference>
<dbReference type="Gene3D" id="1.10.10.580">
    <property type="entry name" value="Structural maintenance of chromosome 1. Chain E"/>
    <property type="match status" value="1"/>
</dbReference>
<dbReference type="InterPro" id="IPR039781">
    <property type="entry name" value="Rad21/Rec8-like"/>
</dbReference>
<dbReference type="InterPro" id="IPR006909">
    <property type="entry name" value="Rad21/Rec8_C_eu"/>
</dbReference>
<dbReference type="InterPro" id="IPR006910">
    <property type="entry name" value="Rad21_Rec8_N"/>
</dbReference>
<dbReference type="InterPro" id="IPR023093">
    <property type="entry name" value="ScpA-like_C"/>
</dbReference>
<dbReference type="InterPro" id="IPR036390">
    <property type="entry name" value="WH_DNA-bd_sf"/>
</dbReference>
<dbReference type="PANTHER" id="PTHR12585:SF69">
    <property type="entry name" value="FI11703P"/>
    <property type="match status" value="1"/>
</dbReference>
<dbReference type="PANTHER" id="PTHR12585">
    <property type="entry name" value="SCC1 / RAD21 FAMILY MEMBER"/>
    <property type="match status" value="1"/>
</dbReference>
<dbReference type="Pfam" id="PF04824">
    <property type="entry name" value="Rad21_Rec8"/>
    <property type="match status" value="1"/>
</dbReference>
<dbReference type="Pfam" id="PF04825">
    <property type="entry name" value="Rad21_Rec8_N"/>
    <property type="match status" value="1"/>
</dbReference>
<dbReference type="SUPFAM" id="SSF46785">
    <property type="entry name" value="Winged helix' DNA-binding domain"/>
    <property type="match status" value="1"/>
</dbReference>
<name>SSC14_ARATH</name>
<gene>
    <name type="primary">SYN4</name>
    <name type="ordered locus">At5g16270</name>
    <name type="ORF">T21H19.190</name>
</gene>
<reference key="1">
    <citation type="journal article" date="2006" name="J. Exp. Bot.">
        <title>Characterization of the three Arabidopsis thaliana RAD21 cohesins reveals differential responses to ionizing radiation.</title>
        <authorList>
            <person name="da Costa-Nunes J.A."/>
            <person name="Bhatt A.M."/>
            <person name="O'Shea S."/>
            <person name="West C.E."/>
            <person name="Bray C.M."/>
            <person name="Grossniklaus U."/>
            <person name="Dickinson H.G."/>
        </authorList>
    </citation>
    <scope>NUCLEOTIDE SEQUENCE [MRNA]</scope>
    <scope>FUNCTION</scope>
    <scope>DISRUPTION PHENOTYPE</scope>
    <scope>TISSUE SPECIFICITY</scope>
    <source>
        <strain>cv. Columbia</strain>
    </source>
</reference>
<reference key="2">
    <citation type="journal article" date="2000" name="Nature">
        <title>Sequence and analysis of chromosome 5 of the plant Arabidopsis thaliana.</title>
        <authorList>
            <person name="Tabata S."/>
            <person name="Kaneko T."/>
            <person name="Nakamura Y."/>
            <person name="Kotani H."/>
            <person name="Kato T."/>
            <person name="Asamizu E."/>
            <person name="Miyajima N."/>
            <person name="Sasamoto S."/>
            <person name="Kimura T."/>
            <person name="Hosouchi T."/>
            <person name="Kawashima K."/>
            <person name="Kohara M."/>
            <person name="Matsumoto M."/>
            <person name="Matsuno A."/>
            <person name="Muraki A."/>
            <person name="Nakayama S."/>
            <person name="Nakazaki N."/>
            <person name="Naruo K."/>
            <person name="Okumura S."/>
            <person name="Shinpo S."/>
            <person name="Takeuchi C."/>
            <person name="Wada T."/>
            <person name="Watanabe A."/>
            <person name="Yamada M."/>
            <person name="Yasuda M."/>
            <person name="Sato S."/>
            <person name="de la Bastide M."/>
            <person name="Huang E."/>
            <person name="Spiegel L."/>
            <person name="Gnoj L."/>
            <person name="O'Shaughnessy A."/>
            <person name="Preston R."/>
            <person name="Habermann K."/>
            <person name="Murray J."/>
            <person name="Johnson D."/>
            <person name="Rohlfing T."/>
            <person name="Nelson J."/>
            <person name="Stoneking T."/>
            <person name="Pepin K."/>
            <person name="Spieth J."/>
            <person name="Sekhon M."/>
            <person name="Armstrong J."/>
            <person name="Becker M."/>
            <person name="Belter E."/>
            <person name="Cordum H."/>
            <person name="Cordes M."/>
            <person name="Courtney L."/>
            <person name="Courtney W."/>
            <person name="Dante M."/>
            <person name="Du H."/>
            <person name="Edwards J."/>
            <person name="Fryman J."/>
            <person name="Haakensen B."/>
            <person name="Lamar E."/>
            <person name="Latreille P."/>
            <person name="Leonard S."/>
            <person name="Meyer R."/>
            <person name="Mulvaney E."/>
            <person name="Ozersky P."/>
            <person name="Riley A."/>
            <person name="Strowmatt C."/>
            <person name="Wagner-McPherson C."/>
            <person name="Wollam A."/>
            <person name="Yoakum M."/>
            <person name="Bell M."/>
            <person name="Dedhia N."/>
            <person name="Parnell L."/>
            <person name="Shah R."/>
            <person name="Rodriguez M."/>
            <person name="Hoon See L."/>
            <person name="Vil D."/>
            <person name="Baker J."/>
            <person name="Kirchoff K."/>
            <person name="Toth K."/>
            <person name="King L."/>
            <person name="Bahret A."/>
            <person name="Miller B."/>
            <person name="Marra M.A."/>
            <person name="Martienssen R."/>
            <person name="McCombie W.R."/>
            <person name="Wilson R.K."/>
            <person name="Murphy G."/>
            <person name="Bancroft I."/>
            <person name="Volckaert G."/>
            <person name="Wambutt R."/>
            <person name="Duesterhoeft A."/>
            <person name="Stiekema W."/>
            <person name="Pohl T."/>
            <person name="Entian K.-D."/>
            <person name="Terryn N."/>
            <person name="Hartley N."/>
            <person name="Bent E."/>
            <person name="Johnson S."/>
            <person name="Langham S.-A."/>
            <person name="McCullagh B."/>
            <person name="Robben J."/>
            <person name="Grymonprez B."/>
            <person name="Zimmermann W."/>
            <person name="Ramsperger U."/>
            <person name="Wedler H."/>
            <person name="Balke K."/>
            <person name="Wedler E."/>
            <person name="Peters S."/>
            <person name="van Staveren M."/>
            <person name="Dirkse W."/>
            <person name="Mooijman P."/>
            <person name="Klein Lankhorst R."/>
            <person name="Weitzenegger T."/>
            <person name="Bothe G."/>
            <person name="Rose M."/>
            <person name="Hauf J."/>
            <person name="Berneiser S."/>
            <person name="Hempel S."/>
            <person name="Feldpausch M."/>
            <person name="Lamberth S."/>
            <person name="Villarroel R."/>
            <person name="Gielen J."/>
            <person name="Ardiles W."/>
            <person name="Bents O."/>
            <person name="Lemcke K."/>
            <person name="Kolesov G."/>
            <person name="Mayer K.F.X."/>
            <person name="Rudd S."/>
            <person name="Schoof H."/>
            <person name="Schueller C."/>
            <person name="Zaccaria P."/>
            <person name="Mewes H.-W."/>
            <person name="Bevan M."/>
            <person name="Fransz P.F."/>
        </authorList>
    </citation>
    <scope>NUCLEOTIDE SEQUENCE [LARGE SCALE GENOMIC DNA]</scope>
    <source>
        <strain>cv. Columbia</strain>
    </source>
</reference>
<reference key="3">
    <citation type="journal article" date="2017" name="Plant J.">
        <title>Araport11: a complete reannotation of the Arabidopsis thaliana reference genome.</title>
        <authorList>
            <person name="Cheng C.Y."/>
            <person name="Krishnakumar V."/>
            <person name="Chan A.P."/>
            <person name="Thibaud-Nissen F."/>
            <person name="Schobel S."/>
            <person name="Town C.D."/>
        </authorList>
    </citation>
    <scope>GENOME REANNOTATION</scope>
    <source>
        <strain>cv. Columbia</strain>
    </source>
</reference>
<reference key="4">
    <citation type="journal article" date="2003" name="Science">
        <title>Empirical analysis of transcriptional activity in the Arabidopsis genome.</title>
        <authorList>
            <person name="Yamada K."/>
            <person name="Lim J."/>
            <person name="Dale J.M."/>
            <person name="Chen H."/>
            <person name="Shinn P."/>
            <person name="Palm C.J."/>
            <person name="Southwick A.M."/>
            <person name="Wu H.C."/>
            <person name="Kim C.J."/>
            <person name="Nguyen M."/>
            <person name="Pham P.K."/>
            <person name="Cheuk R.F."/>
            <person name="Karlin-Newmann G."/>
            <person name="Liu S.X."/>
            <person name="Lam B."/>
            <person name="Sakano H."/>
            <person name="Wu T."/>
            <person name="Yu G."/>
            <person name="Miranda M."/>
            <person name="Quach H.L."/>
            <person name="Tripp M."/>
            <person name="Chang C.H."/>
            <person name="Lee J.M."/>
            <person name="Toriumi M.J."/>
            <person name="Chan M.M."/>
            <person name="Tang C.C."/>
            <person name="Onodera C.S."/>
            <person name="Deng J.M."/>
            <person name="Akiyama K."/>
            <person name="Ansari Y."/>
            <person name="Arakawa T."/>
            <person name="Banh J."/>
            <person name="Banno F."/>
            <person name="Bowser L."/>
            <person name="Brooks S.Y."/>
            <person name="Carninci P."/>
            <person name="Chao Q."/>
            <person name="Choy N."/>
            <person name="Enju A."/>
            <person name="Goldsmith A.D."/>
            <person name="Gurjal M."/>
            <person name="Hansen N.F."/>
            <person name="Hayashizaki Y."/>
            <person name="Johnson-Hopson C."/>
            <person name="Hsuan V.W."/>
            <person name="Iida K."/>
            <person name="Karnes M."/>
            <person name="Khan S."/>
            <person name="Koesema E."/>
            <person name="Ishida J."/>
            <person name="Jiang P.X."/>
            <person name="Jones T."/>
            <person name="Kawai J."/>
            <person name="Kamiya A."/>
            <person name="Meyers C."/>
            <person name="Nakajima M."/>
            <person name="Narusaka M."/>
            <person name="Seki M."/>
            <person name="Sakurai T."/>
            <person name="Satou M."/>
            <person name="Tamse R."/>
            <person name="Vaysberg M."/>
            <person name="Wallender E.K."/>
            <person name="Wong C."/>
            <person name="Yamamura Y."/>
            <person name="Yuan S."/>
            <person name="Shinozaki K."/>
            <person name="Davis R.W."/>
            <person name="Theologis A."/>
            <person name="Ecker J.R."/>
        </authorList>
    </citation>
    <scope>NUCLEOTIDE SEQUENCE [LARGE SCALE MRNA] OF 672-1031</scope>
    <source>
        <strain>cv. Columbia</strain>
    </source>
</reference>
<reference key="5">
    <citation type="journal article" date="2009" name="Chromosoma">
        <title>Cohesin gene defects may impair sister chromatid alignment and genome stability in Arabidopsis thaliana.</title>
        <authorList>
            <person name="Schubert V."/>
            <person name="Weissleder A."/>
            <person name="Ali H."/>
            <person name="Fuchs J."/>
            <person name="Lermontova I."/>
            <person name="Meister A."/>
            <person name="Schubert I."/>
        </authorList>
    </citation>
    <scope>FUNCTION</scope>
    <scope>DISRUPTION PHENOTYPE</scope>
    <source>
        <strain>cv. Columbia</strain>
    </source>
</reference>
<proteinExistence type="evidence at transcript level"/>
<comment type="function">
    <text evidence="3 4">Involved in sister chromatid and centromere cohesion during mitosis.</text>
</comment>
<comment type="subunit">
    <text evidence="1">Component of the cohesin complex.</text>
</comment>
<comment type="subcellular location">
    <subcellularLocation>
        <location evidence="1">Nucleus</location>
    </subcellularLocation>
    <subcellularLocation>
        <location evidence="5">Chromosome</location>
        <location evidence="5">Centromere</location>
    </subcellularLocation>
</comment>
<comment type="tissue specificity">
    <text evidence="3">Expressed in tissues containing dividing cells such as seedlings, flower buds, flowers and inflorescence meristem tissue.</text>
</comment>
<comment type="disruption phenotype">
    <text evidence="3 4">Decreased sister chromatid alignment along arms in tetraploid cells (4C) nuclei and impaired sister centromere cohesion, associated with a high frequency of anaphases with bridges. Slightly slower development leading to delayed flowering.</text>
</comment>
<comment type="similarity">
    <text evidence="5">Belongs to the rad21 family.</text>
</comment>
<comment type="sequence caution" evidence="5">
    <conflict type="erroneous initiation">
        <sequence resource="EMBL-CDS" id="AAK96855"/>
    </conflict>
    <text>Truncated N-terminus.</text>
</comment>
<comment type="sequence caution" evidence="5">
    <conflict type="erroneous gene model prediction">
        <sequence resource="EMBL-CDS" id="CAC01868"/>
    </conflict>
</comment>